<organism>
    <name type="scientific">Xenopus laevis</name>
    <name type="common">African clawed frog</name>
    <dbReference type="NCBI Taxonomy" id="8355"/>
    <lineage>
        <taxon>Eukaryota</taxon>
        <taxon>Metazoa</taxon>
        <taxon>Chordata</taxon>
        <taxon>Craniata</taxon>
        <taxon>Vertebrata</taxon>
        <taxon>Euteleostomi</taxon>
        <taxon>Amphibia</taxon>
        <taxon>Batrachia</taxon>
        <taxon>Anura</taxon>
        <taxon>Pipoidea</taxon>
        <taxon>Pipidae</taxon>
        <taxon>Xenopodinae</taxon>
        <taxon>Xenopus</taxon>
        <taxon>Xenopus</taxon>
    </lineage>
</organism>
<feature type="chain" id="PRO_0000345131" description="WD repeat-containing protein 37">
    <location>
        <begin position="1"/>
        <end position="495"/>
    </location>
</feature>
<feature type="repeat" description="WD 1">
    <location>
        <begin position="154"/>
        <end position="194"/>
    </location>
</feature>
<feature type="repeat" description="WD 2">
    <location>
        <begin position="197"/>
        <end position="236"/>
    </location>
</feature>
<feature type="repeat" description="WD 3">
    <location>
        <begin position="280"/>
        <end position="319"/>
    </location>
</feature>
<feature type="repeat" description="WD 4">
    <location>
        <begin position="322"/>
        <end position="361"/>
    </location>
</feature>
<feature type="repeat" description="WD 5">
    <location>
        <begin position="366"/>
        <end position="404"/>
    </location>
</feature>
<feature type="repeat" description="WD 6">
    <location>
        <begin position="407"/>
        <end position="446"/>
    </location>
</feature>
<feature type="repeat" description="WD 7">
    <location>
        <begin position="453"/>
        <end position="494"/>
    </location>
</feature>
<feature type="region of interest" description="Disordered" evidence="2">
    <location>
        <begin position="1"/>
        <end position="34"/>
    </location>
</feature>
<feature type="region of interest" description="Disordered" evidence="2">
    <location>
        <begin position="237"/>
        <end position="268"/>
    </location>
</feature>
<feature type="compositionally biased region" description="Polar residues" evidence="2">
    <location>
        <begin position="22"/>
        <end position="31"/>
    </location>
</feature>
<feature type="compositionally biased region" description="Acidic residues" evidence="2">
    <location>
        <begin position="246"/>
        <end position="264"/>
    </location>
</feature>
<reference key="1">
    <citation type="submission" date="2004-07" db="EMBL/GenBank/DDBJ databases">
        <authorList>
            <consortium name="NIH - Xenopus Gene Collection (XGC) project"/>
        </authorList>
    </citation>
    <scope>NUCLEOTIDE SEQUENCE [LARGE SCALE MRNA]</scope>
    <source>
        <tissue>Oocyte</tissue>
    </source>
</reference>
<evidence type="ECO:0000250" key="1">
    <source>
        <dbReference type="UniProtKB" id="Q9Y2I8"/>
    </source>
</evidence>
<evidence type="ECO:0000256" key="2">
    <source>
        <dbReference type="SAM" id="MobiDB-lite"/>
    </source>
</evidence>
<dbReference type="EMBL" id="BC077620">
    <property type="protein sequence ID" value="AAH77620.1"/>
    <property type="molecule type" value="mRNA"/>
</dbReference>
<dbReference type="RefSeq" id="NP_001086895.1">
    <property type="nucleotide sequence ID" value="NM_001093426.1"/>
</dbReference>
<dbReference type="SMR" id="Q6DDF0"/>
<dbReference type="BioGRID" id="103590">
    <property type="interactions" value="1"/>
</dbReference>
<dbReference type="IntAct" id="Q6DDF0">
    <property type="interactions" value="1"/>
</dbReference>
<dbReference type="DNASU" id="446730"/>
<dbReference type="GeneID" id="446730"/>
<dbReference type="KEGG" id="xla:446730"/>
<dbReference type="AGR" id="Xenbase:XB-GENE-5740183"/>
<dbReference type="CTD" id="446730"/>
<dbReference type="Xenbase" id="XB-GENE-5740183">
    <property type="gene designation" value="wdr37.L"/>
</dbReference>
<dbReference type="OrthoDB" id="9984207at2759"/>
<dbReference type="Proteomes" id="UP000186698">
    <property type="component" value="Chromosome 6L"/>
</dbReference>
<dbReference type="Bgee" id="446730">
    <property type="expression patterns" value="Expressed in egg cell and 19 other cell types or tissues"/>
</dbReference>
<dbReference type="GO" id="GO:0005737">
    <property type="term" value="C:cytoplasm"/>
    <property type="evidence" value="ECO:0000250"/>
    <property type="project" value="UniProtKB"/>
</dbReference>
<dbReference type="GO" id="GO:0005634">
    <property type="term" value="C:nucleus"/>
    <property type="evidence" value="ECO:0000250"/>
    <property type="project" value="UniProtKB"/>
</dbReference>
<dbReference type="CDD" id="cd00200">
    <property type="entry name" value="WD40"/>
    <property type="match status" value="1"/>
</dbReference>
<dbReference type="FunFam" id="2.130.10.10:FF:000511">
    <property type="entry name" value="WD repeat domain 37"/>
    <property type="match status" value="1"/>
</dbReference>
<dbReference type="FunFam" id="2.130.10.10:FF:000080">
    <property type="entry name" value="WD repeat-containing protein 37"/>
    <property type="match status" value="1"/>
</dbReference>
<dbReference type="FunFam" id="2.130.10.10:FF:000152">
    <property type="entry name" value="WD repeat-containing protein 37"/>
    <property type="match status" value="1"/>
</dbReference>
<dbReference type="Gene3D" id="2.130.10.10">
    <property type="entry name" value="YVTN repeat-like/Quinoprotein amine dehydrogenase"/>
    <property type="match status" value="3"/>
</dbReference>
<dbReference type="InterPro" id="IPR020472">
    <property type="entry name" value="G-protein_beta_WD-40_rep"/>
</dbReference>
<dbReference type="InterPro" id="IPR015943">
    <property type="entry name" value="WD40/YVTN_repeat-like_dom_sf"/>
</dbReference>
<dbReference type="InterPro" id="IPR019775">
    <property type="entry name" value="WD40_repeat_CS"/>
</dbReference>
<dbReference type="InterPro" id="IPR036322">
    <property type="entry name" value="WD40_repeat_dom_sf"/>
</dbReference>
<dbReference type="InterPro" id="IPR001680">
    <property type="entry name" value="WD40_rpt"/>
</dbReference>
<dbReference type="PANTHER" id="PTHR19855:SF12">
    <property type="entry name" value="WD REPEAT-CONTAINING PROTEIN 37"/>
    <property type="match status" value="1"/>
</dbReference>
<dbReference type="PANTHER" id="PTHR19855">
    <property type="entry name" value="WD40 REPEAT PROTEIN 12, 37"/>
    <property type="match status" value="1"/>
</dbReference>
<dbReference type="Pfam" id="PF00400">
    <property type="entry name" value="WD40"/>
    <property type="match status" value="6"/>
</dbReference>
<dbReference type="PRINTS" id="PR00320">
    <property type="entry name" value="GPROTEINBRPT"/>
</dbReference>
<dbReference type="SMART" id="SM00320">
    <property type="entry name" value="WD40"/>
    <property type="match status" value="7"/>
</dbReference>
<dbReference type="SUPFAM" id="SSF50978">
    <property type="entry name" value="WD40 repeat-like"/>
    <property type="match status" value="1"/>
</dbReference>
<dbReference type="PROSITE" id="PS00678">
    <property type="entry name" value="WD_REPEATS_1"/>
    <property type="match status" value="2"/>
</dbReference>
<dbReference type="PROSITE" id="PS50082">
    <property type="entry name" value="WD_REPEATS_2"/>
    <property type="match status" value="4"/>
</dbReference>
<dbReference type="PROSITE" id="PS50294">
    <property type="entry name" value="WD_REPEATS_REGION"/>
    <property type="match status" value="1"/>
</dbReference>
<sequence length="495" mass="54994">MPTESGSWAAARQTKQKRKSHSLSIKRTNSSEQDRLGLQRDMLEGQDSKLPPSVRNTLLELFGQIEREFENLYLENLELRREIDTLNDRLAVEGQAIDGAELSKGQMKTKASHSTSQLSQKLKTTYKASTSKIVSSFKTTTSRAICQLVKDYVGHRDGLWDVSVTRTQPVVLGTASADHTALLWSIETGKCLIKYVGHAGSVNSIKFHPTEQIALTASGDQTAHIWRYMVQLPTPQPMADTSQISGEEEVDFSDKDENDGDGDASSDCPTVRVPLTALKSHQGVVIAADWLVGGKQAVTASWDRTANLYDVETSELVHSLTGHDQELTHCCTHPTQRLVVTSSRDTTFRLWDFRDPSIHSVNVFQGHTDTVTSAVFTVGDNVVSGSDDRTVKVWDLKNMRSPIATIRTDSAVNRISVSVGQRIIALPHDNRQVRLFDISGVRLARLPRSNRQGHRRMVCCCAWSEDHPTCNLFSCGFDRQAIGWNINIPALLQEK</sequence>
<proteinExistence type="evidence at transcript level"/>
<accession>Q6DDF0</accession>
<keyword id="KW-0963">Cytoplasm</keyword>
<keyword id="KW-0539">Nucleus</keyword>
<keyword id="KW-1185">Reference proteome</keyword>
<keyword id="KW-0677">Repeat</keyword>
<keyword id="KW-0853">WD repeat</keyword>
<gene>
    <name type="primary">wdr37</name>
</gene>
<protein>
    <recommendedName>
        <fullName>WD repeat-containing protein 37</fullName>
    </recommendedName>
</protein>
<name>WDR37_XENLA</name>
<comment type="subcellular location">
    <subcellularLocation>
        <location evidence="1">Cytoplasm</location>
    </subcellularLocation>
    <subcellularLocation>
        <location evidence="1">Nucleus</location>
    </subcellularLocation>
</comment>